<reference key="1">
    <citation type="journal article" date="2016" name="Stand. Genomic Sci.">
        <title>Complete genome sequence of Methanospirillum hungatei type strain JF1.</title>
        <authorList>
            <person name="Gunsalus R.P."/>
            <person name="Cook L.E."/>
            <person name="Crable B."/>
            <person name="Rohlin L."/>
            <person name="McDonald E."/>
            <person name="Mouttaki H."/>
            <person name="Sieber J.R."/>
            <person name="Poweleit N."/>
            <person name="Zhou H."/>
            <person name="Lapidus A.L."/>
            <person name="Daligault H.E."/>
            <person name="Land M."/>
            <person name="Gilna P."/>
            <person name="Ivanova N."/>
            <person name="Kyrpides N."/>
            <person name="Culley D.E."/>
            <person name="McInerney M.J."/>
        </authorList>
    </citation>
    <scope>NUCLEOTIDE SEQUENCE [LARGE SCALE GENOMIC DNA]</scope>
    <source>
        <strain>ATCC 27890 / DSM 864 / NBRC 100397 / JF-1</strain>
    </source>
</reference>
<sequence>MTRDVVRKARLSGERTEDIESLLSSMEADRNIASSDVLVDMAHLVMLTRQQIVHEDHAKTLMKELLCMYESGVPAEAFDPSYEDIHAGIETILTRKTGGDVGGRLHIGRSRNDEVATCLRIRTRDIILDQLEALTRLRSVLLSVAADHITTVMPGFTHLQHAQPVTLAHHLLAYEQMFSRDFDRLFDALRRVNCSPLGSAALASTGYPLDRPFTADLLGFDRILVNSMDAVASRDFAEETLACDTMLLTNISRFCEELIIWSSAFVQFVNLDDRYCSTSSIMPQKKNPDVAEILRSRTGTILGSFVSAITIVKGLPMAYNRDLQDLNPHLWRGITGVRRDIDLLAGMVESATFNRERMAEEAGRGGTTTTELADTLVREFNIPFRTAHHIVGKAVKDGSLDLVTLDRGAEEFYGKTLSSLGVTQKNIDSALSVSTSLSVRKLPGGPAPDAVLDALAERRKELEKDIELICDKKTQISASLHELLTQARRIAQL</sequence>
<evidence type="ECO:0000255" key="1">
    <source>
        <dbReference type="HAMAP-Rule" id="MF_00006"/>
    </source>
</evidence>
<protein>
    <recommendedName>
        <fullName evidence="1">Argininosuccinate lyase</fullName>
        <shortName evidence="1">ASAL</shortName>
        <ecNumber evidence="1">4.3.2.1</ecNumber>
    </recommendedName>
    <alternativeName>
        <fullName evidence="1">Arginosuccinase</fullName>
    </alternativeName>
</protein>
<gene>
    <name evidence="1" type="primary">argH</name>
    <name type="ordered locus">Mhun_0084</name>
</gene>
<comment type="catalytic activity">
    <reaction evidence="1">
        <text>2-(N(omega)-L-arginino)succinate = fumarate + L-arginine</text>
        <dbReference type="Rhea" id="RHEA:24020"/>
        <dbReference type="ChEBI" id="CHEBI:29806"/>
        <dbReference type="ChEBI" id="CHEBI:32682"/>
        <dbReference type="ChEBI" id="CHEBI:57472"/>
        <dbReference type="EC" id="4.3.2.1"/>
    </reaction>
</comment>
<comment type="pathway">
    <text evidence="1">Amino-acid biosynthesis; L-arginine biosynthesis; L-arginine from L-ornithine and carbamoyl phosphate: step 3/3.</text>
</comment>
<comment type="subcellular location">
    <subcellularLocation>
        <location evidence="1">Cytoplasm</location>
    </subcellularLocation>
</comment>
<comment type="similarity">
    <text evidence="1">Belongs to the lyase 1 family. Argininosuccinate lyase subfamily.</text>
</comment>
<dbReference type="EC" id="4.3.2.1" evidence="1"/>
<dbReference type="EMBL" id="CP000254">
    <property type="protein sequence ID" value="ABD39862.1"/>
    <property type="molecule type" value="Genomic_DNA"/>
</dbReference>
<dbReference type="RefSeq" id="WP_011447158.1">
    <property type="nucleotide sequence ID" value="NC_007796.1"/>
</dbReference>
<dbReference type="SMR" id="Q2FR16"/>
<dbReference type="FunCoup" id="Q2FR16">
    <property type="interactions" value="179"/>
</dbReference>
<dbReference type="STRING" id="323259.Mhun_0084"/>
<dbReference type="EnsemblBacteria" id="ABD39862">
    <property type="protein sequence ID" value="ABD39862"/>
    <property type="gene ID" value="Mhun_0084"/>
</dbReference>
<dbReference type="GeneID" id="3922197"/>
<dbReference type="KEGG" id="mhu:Mhun_0084"/>
<dbReference type="eggNOG" id="arCOG01748">
    <property type="taxonomic scope" value="Archaea"/>
</dbReference>
<dbReference type="HOGENOM" id="CLU_027272_2_3_2"/>
<dbReference type="InParanoid" id="Q2FR16"/>
<dbReference type="OrthoDB" id="27337at2157"/>
<dbReference type="UniPathway" id="UPA00068">
    <property type="reaction ID" value="UER00114"/>
</dbReference>
<dbReference type="Proteomes" id="UP000001941">
    <property type="component" value="Chromosome"/>
</dbReference>
<dbReference type="GO" id="GO:0005829">
    <property type="term" value="C:cytosol"/>
    <property type="evidence" value="ECO:0007669"/>
    <property type="project" value="TreeGrafter"/>
</dbReference>
<dbReference type="GO" id="GO:0004056">
    <property type="term" value="F:argininosuccinate lyase activity"/>
    <property type="evidence" value="ECO:0007669"/>
    <property type="project" value="UniProtKB-UniRule"/>
</dbReference>
<dbReference type="GO" id="GO:0042450">
    <property type="term" value="P:arginine biosynthetic process via ornithine"/>
    <property type="evidence" value="ECO:0007669"/>
    <property type="project" value="InterPro"/>
</dbReference>
<dbReference type="GO" id="GO:0006526">
    <property type="term" value="P:L-arginine biosynthetic process"/>
    <property type="evidence" value="ECO:0007669"/>
    <property type="project" value="UniProtKB-UniRule"/>
</dbReference>
<dbReference type="CDD" id="cd01359">
    <property type="entry name" value="Argininosuccinate_lyase"/>
    <property type="match status" value="1"/>
</dbReference>
<dbReference type="Gene3D" id="1.10.40.30">
    <property type="entry name" value="Fumarase/aspartase (C-terminal domain)"/>
    <property type="match status" value="1"/>
</dbReference>
<dbReference type="Gene3D" id="1.20.200.10">
    <property type="entry name" value="Fumarase/aspartase (Central domain)"/>
    <property type="match status" value="1"/>
</dbReference>
<dbReference type="Gene3D" id="1.10.275.10">
    <property type="entry name" value="Fumarase/aspartase (N-terminal domain)"/>
    <property type="match status" value="1"/>
</dbReference>
<dbReference type="HAMAP" id="MF_00006">
    <property type="entry name" value="Arg_succ_lyase"/>
    <property type="match status" value="1"/>
</dbReference>
<dbReference type="InterPro" id="IPR029419">
    <property type="entry name" value="Arg_succ_lyase_C"/>
</dbReference>
<dbReference type="InterPro" id="IPR009049">
    <property type="entry name" value="Argininosuccinate_lyase"/>
</dbReference>
<dbReference type="InterPro" id="IPR024083">
    <property type="entry name" value="Fumarase/histidase_N"/>
</dbReference>
<dbReference type="InterPro" id="IPR000362">
    <property type="entry name" value="Fumarate_lyase_fam"/>
</dbReference>
<dbReference type="InterPro" id="IPR022761">
    <property type="entry name" value="Fumarate_lyase_N"/>
</dbReference>
<dbReference type="InterPro" id="IPR008948">
    <property type="entry name" value="L-Aspartase-like"/>
</dbReference>
<dbReference type="NCBIfam" id="TIGR00838">
    <property type="entry name" value="argH"/>
    <property type="match status" value="1"/>
</dbReference>
<dbReference type="PANTHER" id="PTHR43814">
    <property type="entry name" value="ARGININOSUCCINATE LYASE"/>
    <property type="match status" value="1"/>
</dbReference>
<dbReference type="PANTHER" id="PTHR43814:SF1">
    <property type="entry name" value="ARGININOSUCCINATE LYASE"/>
    <property type="match status" value="1"/>
</dbReference>
<dbReference type="Pfam" id="PF14698">
    <property type="entry name" value="ASL_C2"/>
    <property type="match status" value="1"/>
</dbReference>
<dbReference type="Pfam" id="PF00206">
    <property type="entry name" value="Lyase_1"/>
    <property type="match status" value="1"/>
</dbReference>
<dbReference type="PRINTS" id="PR00145">
    <property type="entry name" value="ARGSUCLYASE"/>
</dbReference>
<dbReference type="PRINTS" id="PR00149">
    <property type="entry name" value="FUMRATELYASE"/>
</dbReference>
<dbReference type="SUPFAM" id="SSF48557">
    <property type="entry name" value="L-aspartase-like"/>
    <property type="match status" value="1"/>
</dbReference>
<proteinExistence type="inferred from homology"/>
<keyword id="KW-0028">Amino-acid biosynthesis</keyword>
<keyword id="KW-0055">Arginine biosynthesis</keyword>
<keyword id="KW-0963">Cytoplasm</keyword>
<keyword id="KW-0456">Lyase</keyword>
<keyword id="KW-1185">Reference proteome</keyword>
<name>ARLY_METHJ</name>
<feature type="chain" id="PRO_0000240792" description="Argininosuccinate lyase">
    <location>
        <begin position="1"/>
        <end position="493"/>
    </location>
</feature>
<accession>Q2FR16</accession>
<organism>
    <name type="scientific">Methanospirillum hungatei JF-1 (strain ATCC 27890 / DSM 864 / NBRC 100397 / JF-1)</name>
    <dbReference type="NCBI Taxonomy" id="323259"/>
    <lineage>
        <taxon>Archaea</taxon>
        <taxon>Methanobacteriati</taxon>
        <taxon>Methanobacteriota</taxon>
        <taxon>Stenosarchaea group</taxon>
        <taxon>Methanomicrobia</taxon>
        <taxon>Methanomicrobiales</taxon>
        <taxon>Methanospirillaceae</taxon>
        <taxon>Methanospirillum</taxon>
    </lineage>
</organism>